<reference key="1">
    <citation type="submission" date="2007-06" db="EMBL/GenBank/DDBJ databases">
        <authorList>
            <person name="Dodson R.J."/>
            <person name="Harkins D."/>
            <person name="Paulsen I.T."/>
        </authorList>
    </citation>
    <scope>NUCLEOTIDE SEQUENCE [LARGE SCALE GENOMIC DNA]</scope>
    <source>
        <strain>DSM 24068 / PA7</strain>
    </source>
</reference>
<gene>
    <name evidence="1" type="primary">kptA</name>
    <name type="ordered locus">PSPA7_0054</name>
</gene>
<protein>
    <recommendedName>
        <fullName evidence="1">Probable RNA 2'-phosphotransferase</fullName>
        <ecNumber evidence="1">2.7.1.-</ecNumber>
    </recommendedName>
</protein>
<sequence length="182" mass="19920">MDRKTLDDTSRFLSHVLRHQPEAIGLTLDGEGWADIDALIAGAARDGRALDRALLGAVLRSNDKQRFAFSADGQRIRAVQGHSHAAVAIAYAPAVPPAVLYHGTARRFLDSIREHGLVPGSRHHVHLSARRATALEVGRRYGSPVLLEVDARDMHLAGHLFHQAENGVWLAGQVPVRFIREA</sequence>
<name>KPTA_PSEP7</name>
<organism>
    <name type="scientific">Pseudomonas paraeruginosa (strain DSM 24068 / PA7)</name>
    <name type="common">Pseudomonas aeruginosa (strain PA7)</name>
    <dbReference type="NCBI Taxonomy" id="381754"/>
    <lineage>
        <taxon>Bacteria</taxon>
        <taxon>Pseudomonadati</taxon>
        <taxon>Pseudomonadota</taxon>
        <taxon>Gammaproteobacteria</taxon>
        <taxon>Pseudomonadales</taxon>
        <taxon>Pseudomonadaceae</taxon>
        <taxon>Pseudomonas</taxon>
        <taxon>Pseudomonas paraeruginosa</taxon>
    </lineage>
</organism>
<evidence type="ECO:0000255" key="1">
    <source>
        <dbReference type="HAMAP-Rule" id="MF_00299"/>
    </source>
</evidence>
<feature type="chain" id="PRO_1000022017" description="Probable RNA 2'-phosphotransferase">
    <location>
        <begin position="1"/>
        <end position="182"/>
    </location>
</feature>
<accession>A6UXB5</accession>
<proteinExistence type="inferred from homology"/>
<dbReference type="EC" id="2.7.1.-" evidence="1"/>
<dbReference type="EMBL" id="CP000744">
    <property type="protein sequence ID" value="ABR83060.1"/>
    <property type="molecule type" value="Genomic_DNA"/>
</dbReference>
<dbReference type="RefSeq" id="WP_011979076.1">
    <property type="nucleotide sequence ID" value="NC_009656.1"/>
</dbReference>
<dbReference type="SMR" id="A6UXB5"/>
<dbReference type="KEGG" id="pap:PSPA7_0054"/>
<dbReference type="HOGENOM" id="CLU_052998_4_0_6"/>
<dbReference type="Proteomes" id="UP000001582">
    <property type="component" value="Chromosome"/>
</dbReference>
<dbReference type="GO" id="GO:0003950">
    <property type="term" value="F:NAD+ poly-ADP-ribosyltransferase activity"/>
    <property type="evidence" value="ECO:0007669"/>
    <property type="project" value="InterPro"/>
</dbReference>
<dbReference type="GO" id="GO:0000215">
    <property type="term" value="F:tRNA 2'-phosphotransferase activity"/>
    <property type="evidence" value="ECO:0007669"/>
    <property type="project" value="TreeGrafter"/>
</dbReference>
<dbReference type="GO" id="GO:0006388">
    <property type="term" value="P:tRNA splicing, via endonucleolytic cleavage and ligation"/>
    <property type="evidence" value="ECO:0007669"/>
    <property type="project" value="UniProtKB-UniRule"/>
</dbReference>
<dbReference type="Gene3D" id="3.20.170.30">
    <property type="match status" value="1"/>
</dbReference>
<dbReference type="Gene3D" id="1.10.10.970">
    <property type="entry name" value="RNA 2'-phosphotransferase, Tpt1/KptA family, N-terminal domain"/>
    <property type="match status" value="1"/>
</dbReference>
<dbReference type="HAMAP" id="MF_00299">
    <property type="entry name" value="KptA"/>
    <property type="match status" value="1"/>
</dbReference>
<dbReference type="InterPro" id="IPR002745">
    <property type="entry name" value="Ptrans_KptA/Tpt1"/>
</dbReference>
<dbReference type="InterPro" id="IPR042081">
    <property type="entry name" value="RNA_2'-PTrans_C"/>
</dbReference>
<dbReference type="InterPro" id="IPR022928">
    <property type="entry name" value="RNA_2'-PTrans_KptA"/>
</dbReference>
<dbReference type="InterPro" id="IPR042080">
    <property type="entry name" value="RNA_2'-PTrans_N"/>
</dbReference>
<dbReference type="NCBIfam" id="NF002014">
    <property type="entry name" value="PRK00819.1-4"/>
    <property type="match status" value="1"/>
</dbReference>
<dbReference type="PANTHER" id="PTHR12684">
    <property type="entry name" value="PUTATIVE PHOSPHOTRANSFERASE"/>
    <property type="match status" value="1"/>
</dbReference>
<dbReference type="PANTHER" id="PTHR12684:SF2">
    <property type="entry name" value="TRNA 2'-PHOSPHOTRANSFERASE 1"/>
    <property type="match status" value="1"/>
</dbReference>
<dbReference type="Pfam" id="PF01885">
    <property type="entry name" value="PTS_2-RNA"/>
    <property type="match status" value="1"/>
</dbReference>
<dbReference type="SUPFAM" id="SSF56399">
    <property type="entry name" value="ADP-ribosylation"/>
    <property type="match status" value="1"/>
</dbReference>
<keyword id="KW-0520">NAD</keyword>
<keyword id="KW-0808">Transferase</keyword>
<comment type="function">
    <text evidence="1">Removes the 2'-phosphate from RNA via an intermediate in which the phosphate is ADP-ribosylated by NAD followed by a presumed transesterification to release the RNA and generate ADP-ribose 1''-2''-cyclic phosphate (APPR&gt;P). May function as an ADP-ribosylase.</text>
</comment>
<comment type="similarity">
    <text evidence="1">Belongs to the KptA/TPT1 family.</text>
</comment>